<comment type="function">
    <text evidence="2">Involved in base excision repair of DNA damaged by oxidation or by mutagenic agents. Acts as a DNA glycosylase that recognizes and removes damaged bases. Has a preference for oxidized purines, such as 7,8-dihydro-8-oxoguanine (8-oxoG). Has AP (apurinic/apyrimidinic) lyase activity and introduces nicks in the DNA strand. Cleaves the DNA backbone by beta-delta elimination to generate a single-strand break at the site of the removed base with both 3'- and 5'-phosphates.</text>
</comment>
<comment type="catalytic activity">
    <reaction evidence="2">
        <text>Hydrolysis of DNA containing ring-opened 7-methylguanine residues, releasing 2,6-diamino-4-hydroxy-5-(N-methyl)formamidopyrimidine.</text>
        <dbReference type="EC" id="3.2.2.23"/>
    </reaction>
</comment>
<comment type="catalytic activity">
    <reaction evidence="2">
        <text>2'-deoxyribonucleotide-(2'-deoxyribose 5'-phosphate)-2'-deoxyribonucleotide-DNA = a 3'-end 2'-deoxyribonucleotide-(2,3-dehydro-2,3-deoxyribose 5'-phosphate)-DNA + a 5'-end 5'-phospho-2'-deoxyribonucleoside-DNA + H(+)</text>
        <dbReference type="Rhea" id="RHEA:66592"/>
        <dbReference type="Rhea" id="RHEA-COMP:13180"/>
        <dbReference type="Rhea" id="RHEA-COMP:16897"/>
        <dbReference type="Rhea" id="RHEA-COMP:17067"/>
        <dbReference type="ChEBI" id="CHEBI:15378"/>
        <dbReference type="ChEBI" id="CHEBI:136412"/>
        <dbReference type="ChEBI" id="CHEBI:157695"/>
        <dbReference type="ChEBI" id="CHEBI:167181"/>
        <dbReference type="EC" id="4.2.99.18"/>
    </reaction>
</comment>
<comment type="cofactor">
    <cofactor evidence="2">
        <name>Zn(2+)</name>
        <dbReference type="ChEBI" id="CHEBI:29105"/>
    </cofactor>
    <text evidence="2">Binds 1 zinc ion per subunit.</text>
</comment>
<comment type="subunit">
    <text evidence="2">Monomer.</text>
</comment>
<comment type="similarity">
    <text evidence="2">Belongs to the FPG family.</text>
</comment>
<feature type="initiator methionine" description="Removed" evidence="1">
    <location>
        <position position="1"/>
    </location>
</feature>
<feature type="chain" id="PRO_0000228455" description="Formamidopyrimidine-DNA glycosylase">
    <location>
        <begin position="2"/>
        <end position="271"/>
    </location>
</feature>
<feature type="zinc finger region" description="FPG-type" evidence="2">
    <location>
        <begin position="237"/>
        <end position="271"/>
    </location>
</feature>
<feature type="active site" description="Schiff-base intermediate with DNA" evidence="2">
    <location>
        <position position="2"/>
    </location>
</feature>
<feature type="active site" description="Proton donor" evidence="2">
    <location>
        <position position="3"/>
    </location>
</feature>
<feature type="active site" description="Proton donor; for beta-elimination activity" evidence="2">
    <location>
        <position position="58"/>
    </location>
</feature>
<feature type="active site" description="Proton donor; for delta-elimination activity" evidence="2">
    <location>
        <position position="261"/>
    </location>
</feature>
<feature type="binding site" evidence="2">
    <location>
        <position position="91"/>
    </location>
    <ligand>
        <name>DNA</name>
        <dbReference type="ChEBI" id="CHEBI:16991"/>
    </ligand>
</feature>
<feature type="binding site" evidence="2">
    <location>
        <position position="110"/>
    </location>
    <ligand>
        <name>DNA</name>
        <dbReference type="ChEBI" id="CHEBI:16991"/>
    </ligand>
</feature>
<feature type="binding site" evidence="2">
    <location>
        <position position="152"/>
    </location>
    <ligand>
        <name>DNA</name>
        <dbReference type="ChEBI" id="CHEBI:16991"/>
    </ligand>
</feature>
<organism>
    <name type="scientific">Syntrophotalea carbinolica (strain DSM 2380 / NBRC 103641 / GraBd1)</name>
    <name type="common">Pelobacter carbinolicus</name>
    <dbReference type="NCBI Taxonomy" id="338963"/>
    <lineage>
        <taxon>Bacteria</taxon>
        <taxon>Pseudomonadati</taxon>
        <taxon>Thermodesulfobacteriota</taxon>
        <taxon>Desulfuromonadia</taxon>
        <taxon>Desulfuromonadales</taxon>
        <taxon>Syntrophotaleaceae</taxon>
        <taxon>Syntrophotalea</taxon>
    </lineage>
</organism>
<protein>
    <recommendedName>
        <fullName evidence="2">Formamidopyrimidine-DNA glycosylase</fullName>
        <shortName evidence="2">Fapy-DNA glycosylase</shortName>
        <ecNumber evidence="2">3.2.2.23</ecNumber>
    </recommendedName>
    <alternativeName>
        <fullName evidence="2">DNA-(apurinic or apyrimidinic site) lyase MutM</fullName>
        <shortName evidence="2">AP lyase MutM</shortName>
        <ecNumber evidence="2">4.2.99.18</ecNumber>
    </alternativeName>
</protein>
<accession>Q3A3F2</accession>
<name>FPG_SYNC1</name>
<reference key="1">
    <citation type="submission" date="2005-10" db="EMBL/GenBank/DDBJ databases">
        <title>Complete sequence of Pelobacter carbinolicus DSM 2380.</title>
        <authorList>
            <person name="Copeland A."/>
            <person name="Lucas S."/>
            <person name="Lapidus A."/>
            <person name="Barry K."/>
            <person name="Detter J.C."/>
            <person name="Glavina T."/>
            <person name="Hammon N."/>
            <person name="Israni S."/>
            <person name="Pitluck S."/>
            <person name="Chertkov O."/>
            <person name="Schmutz J."/>
            <person name="Larimer F."/>
            <person name="Land M."/>
            <person name="Kyrpides N."/>
            <person name="Ivanova N."/>
            <person name="Richardson P."/>
        </authorList>
    </citation>
    <scope>NUCLEOTIDE SEQUENCE [LARGE SCALE GENOMIC DNA]</scope>
    <source>
        <strain>DSM 2380 / NBRC 103641 / GraBd1</strain>
    </source>
</reference>
<sequence length="271" mass="30080">MPELPEVETIRRGISPWVIDQKVVAVVVRQPRLRWPVPSNLSACLVGYAFSGVERRAKYLLLPNPAGCLLIHLGMSGSLRIVPSDTPPAAHDHVDIALESGRTLRLNDPRRFGAVLWIEGRPEDHALLAHLGPEPFAVEFTGAMLYARSRGRKLAVKNFIMDQRIVVGVGNIYASEALYRAGIHPMRAAGRVSRRRYAALAEAVRQVLTAAIEAGGTTLRDFTDENGRPGYFSQRLLVYGREGQPCVHCGRPIRCETIGQRSSYFCTRCQR</sequence>
<gene>
    <name evidence="2" type="primary">mutM</name>
    <name evidence="2" type="synonym">fpg</name>
    <name type="ordered locus">Pcar_1864</name>
</gene>
<dbReference type="EC" id="3.2.2.23" evidence="2"/>
<dbReference type="EC" id="4.2.99.18" evidence="2"/>
<dbReference type="EMBL" id="CP000142">
    <property type="protein sequence ID" value="ABA89105.1"/>
    <property type="molecule type" value="Genomic_DNA"/>
</dbReference>
<dbReference type="RefSeq" id="WP_011341608.1">
    <property type="nucleotide sequence ID" value="NC_007498.2"/>
</dbReference>
<dbReference type="SMR" id="Q3A3F2"/>
<dbReference type="STRING" id="338963.Pcar_1864"/>
<dbReference type="KEGG" id="pca:Pcar_1864"/>
<dbReference type="eggNOG" id="COG0266">
    <property type="taxonomic scope" value="Bacteria"/>
</dbReference>
<dbReference type="HOGENOM" id="CLU_038423_1_1_7"/>
<dbReference type="OrthoDB" id="9800855at2"/>
<dbReference type="Proteomes" id="UP000002534">
    <property type="component" value="Chromosome"/>
</dbReference>
<dbReference type="GO" id="GO:0034039">
    <property type="term" value="F:8-oxo-7,8-dihydroguanine DNA N-glycosylase activity"/>
    <property type="evidence" value="ECO:0007669"/>
    <property type="project" value="TreeGrafter"/>
</dbReference>
<dbReference type="GO" id="GO:0140078">
    <property type="term" value="F:class I DNA-(apurinic or apyrimidinic site) endonuclease activity"/>
    <property type="evidence" value="ECO:0007669"/>
    <property type="project" value="UniProtKB-EC"/>
</dbReference>
<dbReference type="GO" id="GO:0003684">
    <property type="term" value="F:damaged DNA binding"/>
    <property type="evidence" value="ECO:0007669"/>
    <property type="project" value="InterPro"/>
</dbReference>
<dbReference type="GO" id="GO:0008270">
    <property type="term" value="F:zinc ion binding"/>
    <property type="evidence" value="ECO:0007669"/>
    <property type="project" value="UniProtKB-UniRule"/>
</dbReference>
<dbReference type="GO" id="GO:0006284">
    <property type="term" value="P:base-excision repair"/>
    <property type="evidence" value="ECO:0007669"/>
    <property type="project" value="InterPro"/>
</dbReference>
<dbReference type="CDD" id="cd08966">
    <property type="entry name" value="EcFpg-like_N"/>
    <property type="match status" value="1"/>
</dbReference>
<dbReference type="FunFam" id="1.10.8.50:FF:000003">
    <property type="entry name" value="Formamidopyrimidine-DNA glycosylase"/>
    <property type="match status" value="1"/>
</dbReference>
<dbReference type="FunFam" id="3.20.190.10:FF:000001">
    <property type="entry name" value="Formamidopyrimidine-DNA glycosylase"/>
    <property type="match status" value="1"/>
</dbReference>
<dbReference type="Gene3D" id="1.10.8.50">
    <property type="match status" value="1"/>
</dbReference>
<dbReference type="Gene3D" id="3.20.190.10">
    <property type="entry name" value="MutM-like, N-terminal"/>
    <property type="match status" value="1"/>
</dbReference>
<dbReference type="HAMAP" id="MF_00103">
    <property type="entry name" value="Fapy_DNA_glycosyl"/>
    <property type="match status" value="1"/>
</dbReference>
<dbReference type="InterPro" id="IPR015886">
    <property type="entry name" value="DNA_glyclase/AP_lyase_DNA-bd"/>
</dbReference>
<dbReference type="InterPro" id="IPR015887">
    <property type="entry name" value="DNA_glyclase_Znf_dom_DNA_BS"/>
</dbReference>
<dbReference type="InterPro" id="IPR020629">
    <property type="entry name" value="Formamido-pyr_DNA_Glyclase"/>
</dbReference>
<dbReference type="InterPro" id="IPR012319">
    <property type="entry name" value="FPG_cat"/>
</dbReference>
<dbReference type="InterPro" id="IPR035937">
    <property type="entry name" value="MutM-like_N-ter"/>
</dbReference>
<dbReference type="InterPro" id="IPR010979">
    <property type="entry name" value="Ribosomal_uS13-like_H2TH"/>
</dbReference>
<dbReference type="InterPro" id="IPR000214">
    <property type="entry name" value="Znf_DNA_glyclase/AP_lyase"/>
</dbReference>
<dbReference type="InterPro" id="IPR010663">
    <property type="entry name" value="Znf_FPG/IleRS"/>
</dbReference>
<dbReference type="NCBIfam" id="TIGR00577">
    <property type="entry name" value="fpg"/>
    <property type="match status" value="1"/>
</dbReference>
<dbReference type="NCBIfam" id="NF002211">
    <property type="entry name" value="PRK01103.1"/>
    <property type="match status" value="1"/>
</dbReference>
<dbReference type="PANTHER" id="PTHR22993">
    <property type="entry name" value="FORMAMIDOPYRIMIDINE-DNA GLYCOSYLASE"/>
    <property type="match status" value="1"/>
</dbReference>
<dbReference type="PANTHER" id="PTHR22993:SF9">
    <property type="entry name" value="FORMAMIDOPYRIMIDINE-DNA GLYCOSYLASE"/>
    <property type="match status" value="1"/>
</dbReference>
<dbReference type="Pfam" id="PF01149">
    <property type="entry name" value="Fapy_DNA_glyco"/>
    <property type="match status" value="1"/>
</dbReference>
<dbReference type="Pfam" id="PF06831">
    <property type="entry name" value="H2TH"/>
    <property type="match status" value="1"/>
</dbReference>
<dbReference type="Pfam" id="PF06827">
    <property type="entry name" value="zf-FPG_IleRS"/>
    <property type="match status" value="1"/>
</dbReference>
<dbReference type="SMART" id="SM00898">
    <property type="entry name" value="Fapy_DNA_glyco"/>
    <property type="match status" value="1"/>
</dbReference>
<dbReference type="SMART" id="SM01232">
    <property type="entry name" value="H2TH"/>
    <property type="match status" value="1"/>
</dbReference>
<dbReference type="SUPFAM" id="SSF57716">
    <property type="entry name" value="Glucocorticoid receptor-like (DNA-binding domain)"/>
    <property type="match status" value="1"/>
</dbReference>
<dbReference type="SUPFAM" id="SSF81624">
    <property type="entry name" value="N-terminal domain of MutM-like DNA repair proteins"/>
    <property type="match status" value="1"/>
</dbReference>
<dbReference type="SUPFAM" id="SSF46946">
    <property type="entry name" value="S13-like H2TH domain"/>
    <property type="match status" value="1"/>
</dbReference>
<dbReference type="PROSITE" id="PS51068">
    <property type="entry name" value="FPG_CAT"/>
    <property type="match status" value="1"/>
</dbReference>
<dbReference type="PROSITE" id="PS01242">
    <property type="entry name" value="ZF_FPG_1"/>
    <property type="match status" value="1"/>
</dbReference>
<dbReference type="PROSITE" id="PS51066">
    <property type="entry name" value="ZF_FPG_2"/>
    <property type="match status" value="1"/>
</dbReference>
<evidence type="ECO:0000250" key="1"/>
<evidence type="ECO:0000255" key="2">
    <source>
        <dbReference type="HAMAP-Rule" id="MF_00103"/>
    </source>
</evidence>
<proteinExistence type="inferred from homology"/>
<keyword id="KW-0227">DNA damage</keyword>
<keyword id="KW-0234">DNA repair</keyword>
<keyword id="KW-0238">DNA-binding</keyword>
<keyword id="KW-0326">Glycosidase</keyword>
<keyword id="KW-0378">Hydrolase</keyword>
<keyword id="KW-0456">Lyase</keyword>
<keyword id="KW-0479">Metal-binding</keyword>
<keyword id="KW-0511">Multifunctional enzyme</keyword>
<keyword id="KW-1185">Reference proteome</keyword>
<keyword id="KW-0862">Zinc</keyword>
<keyword id="KW-0863">Zinc-finger</keyword>